<comment type="function">
    <text evidence="1">Binds to 23S rRNA. Forms part of two intersubunit bridges in the 70S ribosome.</text>
</comment>
<comment type="subunit">
    <text evidence="1">Part of the 50S ribosomal subunit. Forms a cluster with proteins L3 and L19. In the 70S ribosome, L14 and L19 interact and together make contacts with the 16S rRNA in bridges B5 and B8.</text>
</comment>
<comment type="similarity">
    <text evidence="1">Belongs to the universal ribosomal protein uL14 family.</text>
</comment>
<keyword id="KW-1185">Reference proteome</keyword>
<keyword id="KW-0687">Ribonucleoprotein</keyword>
<keyword id="KW-0689">Ribosomal protein</keyword>
<keyword id="KW-0694">RNA-binding</keyword>
<keyword id="KW-0699">rRNA-binding</keyword>
<evidence type="ECO:0000255" key="1">
    <source>
        <dbReference type="HAMAP-Rule" id="MF_01367"/>
    </source>
</evidence>
<evidence type="ECO:0000305" key="2"/>
<feature type="chain" id="PRO_0000266518" description="Large ribosomal subunit protein uL14">
    <location>
        <begin position="1"/>
        <end position="123"/>
    </location>
</feature>
<sequence length="123" mass="13697">MIQMQSTLDAADNSGARRVMCIKVLGGSHRRYAHIGDIIKITVKEAIPRGKVKKGDVLKAVVVRTRKGVRRQDGSVIRFDRNACVLLNDTTEQPIGTRIFGPVTRELRNTKFMKIVSLAPEVL</sequence>
<proteinExistence type="inferred from homology"/>
<dbReference type="EMBL" id="CR378663">
    <property type="protein sequence ID" value="CAG18769.1"/>
    <property type="molecule type" value="Genomic_DNA"/>
</dbReference>
<dbReference type="RefSeq" id="WP_006232349.1">
    <property type="nucleotide sequence ID" value="NC_006370.1"/>
</dbReference>
<dbReference type="SMR" id="Q6LVA6"/>
<dbReference type="STRING" id="298386.PBPRA0330"/>
<dbReference type="KEGG" id="ppr:PBPRA0330"/>
<dbReference type="eggNOG" id="COG0093">
    <property type="taxonomic scope" value="Bacteria"/>
</dbReference>
<dbReference type="HOGENOM" id="CLU_095071_2_1_6"/>
<dbReference type="Proteomes" id="UP000000593">
    <property type="component" value="Chromosome 1"/>
</dbReference>
<dbReference type="GO" id="GO:0022625">
    <property type="term" value="C:cytosolic large ribosomal subunit"/>
    <property type="evidence" value="ECO:0007669"/>
    <property type="project" value="TreeGrafter"/>
</dbReference>
<dbReference type="GO" id="GO:0070180">
    <property type="term" value="F:large ribosomal subunit rRNA binding"/>
    <property type="evidence" value="ECO:0007669"/>
    <property type="project" value="TreeGrafter"/>
</dbReference>
<dbReference type="GO" id="GO:0003735">
    <property type="term" value="F:structural constituent of ribosome"/>
    <property type="evidence" value="ECO:0007669"/>
    <property type="project" value="InterPro"/>
</dbReference>
<dbReference type="GO" id="GO:0006412">
    <property type="term" value="P:translation"/>
    <property type="evidence" value="ECO:0007669"/>
    <property type="project" value="UniProtKB-UniRule"/>
</dbReference>
<dbReference type="CDD" id="cd00337">
    <property type="entry name" value="Ribosomal_uL14"/>
    <property type="match status" value="1"/>
</dbReference>
<dbReference type="FunFam" id="2.40.150.20:FF:000001">
    <property type="entry name" value="50S ribosomal protein L14"/>
    <property type="match status" value="1"/>
</dbReference>
<dbReference type="Gene3D" id="2.40.150.20">
    <property type="entry name" value="Ribosomal protein L14"/>
    <property type="match status" value="1"/>
</dbReference>
<dbReference type="HAMAP" id="MF_01367">
    <property type="entry name" value="Ribosomal_uL14"/>
    <property type="match status" value="1"/>
</dbReference>
<dbReference type="InterPro" id="IPR000218">
    <property type="entry name" value="Ribosomal_uL14"/>
</dbReference>
<dbReference type="InterPro" id="IPR005745">
    <property type="entry name" value="Ribosomal_uL14_bac-type"/>
</dbReference>
<dbReference type="InterPro" id="IPR019972">
    <property type="entry name" value="Ribosomal_uL14_CS"/>
</dbReference>
<dbReference type="InterPro" id="IPR036853">
    <property type="entry name" value="Ribosomal_uL14_sf"/>
</dbReference>
<dbReference type="NCBIfam" id="TIGR01067">
    <property type="entry name" value="rplN_bact"/>
    <property type="match status" value="1"/>
</dbReference>
<dbReference type="PANTHER" id="PTHR11761">
    <property type="entry name" value="50S/60S RIBOSOMAL PROTEIN L14/L23"/>
    <property type="match status" value="1"/>
</dbReference>
<dbReference type="PANTHER" id="PTHR11761:SF3">
    <property type="entry name" value="LARGE RIBOSOMAL SUBUNIT PROTEIN UL14M"/>
    <property type="match status" value="1"/>
</dbReference>
<dbReference type="Pfam" id="PF00238">
    <property type="entry name" value="Ribosomal_L14"/>
    <property type="match status" value="1"/>
</dbReference>
<dbReference type="SMART" id="SM01374">
    <property type="entry name" value="Ribosomal_L14"/>
    <property type="match status" value="1"/>
</dbReference>
<dbReference type="SUPFAM" id="SSF50193">
    <property type="entry name" value="Ribosomal protein L14"/>
    <property type="match status" value="1"/>
</dbReference>
<dbReference type="PROSITE" id="PS00049">
    <property type="entry name" value="RIBOSOMAL_L14"/>
    <property type="match status" value="1"/>
</dbReference>
<name>RL14_PHOPR</name>
<gene>
    <name evidence="1" type="primary">rplN</name>
    <name type="ordered locus">PBPRA0330</name>
</gene>
<organism>
    <name type="scientific">Photobacterium profundum (strain SS9)</name>
    <dbReference type="NCBI Taxonomy" id="298386"/>
    <lineage>
        <taxon>Bacteria</taxon>
        <taxon>Pseudomonadati</taxon>
        <taxon>Pseudomonadota</taxon>
        <taxon>Gammaproteobacteria</taxon>
        <taxon>Vibrionales</taxon>
        <taxon>Vibrionaceae</taxon>
        <taxon>Photobacterium</taxon>
    </lineage>
</organism>
<accession>Q6LVA6</accession>
<reference key="1">
    <citation type="journal article" date="2005" name="Science">
        <title>Life at depth: Photobacterium profundum genome sequence and expression analysis.</title>
        <authorList>
            <person name="Vezzi A."/>
            <person name="Campanaro S."/>
            <person name="D'Angelo M."/>
            <person name="Simonato F."/>
            <person name="Vitulo N."/>
            <person name="Lauro F.M."/>
            <person name="Cestaro A."/>
            <person name="Malacrida G."/>
            <person name="Simionati B."/>
            <person name="Cannata N."/>
            <person name="Romualdi C."/>
            <person name="Bartlett D.H."/>
            <person name="Valle G."/>
        </authorList>
    </citation>
    <scope>NUCLEOTIDE SEQUENCE [LARGE SCALE GENOMIC DNA]</scope>
    <source>
        <strain>ATCC BAA-1253 / SS9</strain>
    </source>
</reference>
<protein>
    <recommendedName>
        <fullName evidence="1">Large ribosomal subunit protein uL14</fullName>
    </recommendedName>
    <alternativeName>
        <fullName evidence="2">50S ribosomal protein L14</fullName>
    </alternativeName>
</protein>